<organism>
    <name type="scientific">Xenopus laevis</name>
    <name type="common">African clawed frog</name>
    <dbReference type="NCBI Taxonomy" id="8355"/>
    <lineage>
        <taxon>Eukaryota</taxon>
        <taxon>Metazoa</taxon>
        <taxon>Chordata</taxon>
        <taxon>Craniata</taxon>
        <taxon>Vertebrata</taxon>
        <taxon>Euteleostomi</taxon>
        <taxon>Amphibia</taxon>
        <taxon>Batrachia</taxon>
        <taxon>Anura</taxon>
        <taxon>Pipoidea</taxon>
        <taxon>Pipidae</taxon>
        <taxon>Xenopodinae</taxon>
        <taxon>Xenopus</taxon>
        <taxon>Xenopus</taxon>
    </lineage>
</organism>
<reference key="1">
    <citation type="submission" date="2004-06" db="EMBL/GenBank/DDBJ databases">
        <authorList>
            <consortium name="NIH - Xenopus Gene Collection (XGC) project"/>
        </authorList>
    </citation>
    <scope>NUCLEOTIDE SEQUENCE [LARGE SCALE MRNA]</scope>
    <source>
        <tissue>Embryo</tissue>
    </source>
</reference>
<sequence length="135" mass="15616">MAEKFDNLEDHLEKFVENIRQLGIIVSDFQPSSQAGLNQKLNFLVRGLQDIDKCRQQLHDITVPLEVFDYIDQGRNPQLYTKECLERALAKNEQVKGKIDTLKKFKSLLIQELSKVFPEDMAKYKAVRGEDHPPS</sequence>
<gene>
    <name type="primary">med10</name>
</gene>
<keyword id="KW-0010">Activator</keyword>
<keyword id="KW-0539">Nucleus</keyword>
<keyword id="KW-1185">Reference proteome</keyword>
<keyword id="KW-0804">Transcription</keyword>
<keyword id="KW-0805">Transcription regulation</keyword>
<evidence type="ECO:0000250" key="1"/>
<evidence type="ECO:0000305" key="2"/>
<protein>
    <recommendedName>
        <fullName>Mediator of RNA polymerase II transcription subunit 10</fullName>
    </recommendedName>
    <alternativeName>
        <fullName>Mediator complex subunit 10</fullName>
    </alternativeName>
</protein>
<comment type="function">
    <text evidence="1">Component of the Mediator complex, a coactivator involved in the regulated transcription of nearly all RNA polymerase II-dependent genes. Mediator functions as a bridge to convey information from gene-specific regulatory proteins to the basal RNA polymerase II transcription machinery. Mediator is recruited to promoters by direct interactions with regulatory proteins and serves as a scaffold for the assembly of a functional preinitiation complex with RNA polymerase II and the general transcription factors (By similarity).</text>
</comment>
<comment type="subunit">
    <text evidence="1">Component of the Mediator complex.</text>
</comment>
<comment type="subcellular location">
    <subcellularLocation>
        <location evidence="2">Nucleus</location>
    </subcellularLocation>
</comment>
<comment type="similarity">
    <text evidence="2">Belongs to the Mediator complex subunit 10 family.</text>
</comment>
<proteinExistence type="evidence at transcript level"/>
<feature type="chain" id="PRO_0000303156" description="Mediator of RNA polymerase II transcription subunit 10">
    <location>
        <begin position="1"/>
        <end position="135"/>
    </location>
</feature>
<name>MED10_XENLA</name>
<dbReference type="EMBL" id="BC072051">
    <property type="protein sequence ID" value="AAH72051.1"/>
    <property type="molecule type" value="mRNA"/>
</dbReference>
<dbReference type="RefSeq" id="NP_001085232.1">
    <property type="nucleotide sequence ID" value="NM_001091763.1"/>
</dbReference>
<dbReference type="SMR" id="Q6IP67"/>
<dbReference type="DNASU" id="432327"/>
<dbReference type="GeneID" id="432327"/>
<dbReference type="KEGG" id="xla:432327"/>
<dbReference type="AGR" id="Xenbase:XB-GENE-6078032"/>
<dbReference type="CTD" id="432327"/>
<dbReference type="Xenbase" id="XB-GENE-6078032">
    <property type="gene designation" value="med10.S"/>
</dbReference>
<dbReference type="OMA" id="QYQRAKM"/>
<dbReference type="OrthoDB" id="337270at2759"/>
<dbReference type="Proteomes" id="UP000186698">
    <property type="component" value="Chromosome 6S"/>
</dbReference>
<dbReference type="Bgee" id="432327">
    <property type="expression patterns" value="Expressed in blastula and 19 other cell types or tissues"/>
</dbReference>
<dbReference type="GO" id="GO:0016592">
    <property type="term" value="C:mediator complex"/>
    <property type="evidence" value="ECO:0007669"/>
    <property type="project" value="InterPro"/>
</dbReference>
<dbReference type="GO" id="GO:0003712">
    <property type="term" value="F:transcription coregulator activity"/>
    <property type="evidence" value="ECO:0007669"/>
    <property type="project" value="InterPro"/>
</dbReference>
<dbReference type="GO" id="GO:0006357">
    <property type="term" value="P:regulation of transcription by RNA polymerase II"/>
    <property type="evidence" value="ECO:0007669"/>
    <property type="project" value="InterPro"/>
</dbReference>
<dbReference type="InterPro" id="IPR019145">
    <property type="entry name" value="Mediator_Med10"/>
</dbReference>
<dbReference type="PANTHER" id="PTHR13345">
    <property type="entry name" value="MEDIATOR OF RNA POLYMERASE II TRANSCRIPTION SUBUNIT 10"/>
    <property type="match status" value="1"/>
</dbReference>
<dbReference type="PANTHER" id="PTHR13345:SF13">
    <property type="entry name" value="MEDIATOR OF RNA POLYMERASE II TRANSCRIPTION SUBUNIT 10"/>
    <property type="match status" value="1"/>
</dbReference>
<dbReference type="Pfam" id="PF09748">
    <property type="entry name" value="Med10"/>
    <property type="match status" value="1"/>
</dbReference>
<accession>Q6IP67</accession>